<name>MINC_BACCN</name>
<accession>A7GTC9</accession>
<evidence type="ECO:0000255" key="1">
    <source>
        <dbReference type="HAMAP-Rule" id="MF_00267"/>
    </source>
</evidence>
<organism>
    <name type="scientific">Bacillus cytotoxicus (strain DSM 22905 / CIP 110041 / 391-98 / NVH 391-98)</name>
    <dbReference type="NCBI Taxonomy" id="315749"/>
    <lineage>
        <taxon>Bacteria</taxon>
        <taxon>Bacillati</taxon>
        <taxon>Bacillota</taxon>
        <taxon>Bacilli</taxon>
        <taxon>Bacillales</taxon>
        <taxon>Bacillaceae</taxon>
        <taxon>Bacillus</taxon>
        <taxon>Bacillus cereus group</taxon>
    </lineage>
</organism>
<reference key="1">
    <citation type="journal article" date="2008" name="Chem. Biol. Interact.">
        <title>Extending the Bacillus cereus group genomics to putative food-borne pathogens of different toxicity.</title>
        <authorList>
            <person name="Lapidus A."/>
            <person name="Goltsman E."/>
            <person name="Auger S."/>
            <person name="Galleron N."/>
            <person name="Segurens B."/>
            <person name="Dossat C."/>
            <person name="Land M.L."/>
            <person name="Broussolle V."/>
            <person name="Brillard J."/>
            <person name="Guinebretiere M.-H."/>
            <person name="Sanchis V."/>
            <person name="Nguen-the C."/>
            <person name="Lereclus D."/>
            <person name="Richardson P."/>
            <person name="Wincker P."/>
            <person name="Weissenbach J."/>
            <person name="Ehrlich S.D."/>
            <person name="Sorokin A."/>
        </authorList>
    </citation>
    <scope>NUCLEOTIDE SEQUENCE [LARGE SCALE GENOMIC DNA]</scope>
    <source>
        <strain>DSM 22905 / CIP 110041 / 391-98 / NVH 391-98</strain>
    </source>
</reference>
<proteinExistence type="inferred from homology"/>
<gene>
    <name evidence="1" type="primary">minC</name>
    <name type="ordered locus">Bcer98_3164</name>
</gene>
<feature type="chain" id="PRO_1000078651" description="Probable septum site-determining protein MinC">
    <location>
        <begin position="1"/>
        <end position="228"/>
    </location>
</feature>
<dbReference type="EMBL" id="CP000764">
    <property type="protein sequence ID" value="ABS23387.1"/>
    <property type="molecule type" value="Genomic_DNA"/>
</dbReference>
<dbReference type="RefSeq" id="WP_012095623.1">
    <property type="nucleotide sequence ID" value="NC_009674.1"/>
</dbReference>
<dbReference type="SMR" id="A7GTC9"/>
<dbReference type="STRING" id="315749.Bcer98_3164"/>
<dbReference type="GeneID" id="33898412"/>
<dbReference type="KEGG" id="bcy:Bcer98_3164"/>
<dbReference type="eggNOG" id="COG0850">
    <property type="taxonomic scope" value="Bacteria"/>
</dbReference>
<dbReference type="HOGENOM" id="CLU_048711_1_1_9"/>
<dbReference type="OrthoDB" id="9790810at2"/>
<dbReference type="Proteomes" id="UP000002300">
    <property type="component" value="Chromosome"/>
</dbReference>
<dbReference type="GO" id="GO:0000902">
    <property type="term" value="P:cell morphogenesis"/>
    <property type="evidence" value="ECO:0007669"/>
    <property type="project" value="InterPro"/>
</dbReference>
<dbReference type="GO" id="GO:0000917">
    <property type="term" value="P:division septum assembly"/>
    <property type="evidence" value="ECO:0007669"/>
    <property type="project" value="UniProtKB-KW"/>
</dbReference>
<dbReference type="GO" id="GO:1901891">
    <property type="term" value="P:regulation of cell septum assembly"/>
    <property type="evidence" value="ECO:0007669"/>
    <property type="project" value="InterPro"/>
</dbReference>
<dbReference type="FunFam" id="2.160.20.70:FF:000003">
    <property type="entry name" value="Probable septum site-determining protein MinC"/>
    <property type="match status" value="1"/>
</dbReference>
<dbReference type="FunFam" id="3.30.160.540:FF:000001">
    <property type="entry name" value="Probable septum site-determining protein MinC"/>
    <property type="match status" value="1"/>
</dbReference>
<dbReference type="Gene3D" id="2.160.20.70">
    <property type="match status" value="1"/>
</dbReference>
<dbReference type="Gene3D" id="3.30.160.540">
    <property type="match status" value="1"/>
</dbReference>
<dbReference type="HAMAP" id="MF_00267">
    <property type="entry name" value="MinC"/>
    <property type="match status" value="1"/>
</dbReference>
<dbReference type="InterPro" id="IPR016098">
    <property type="entry name" value="CAP/MinC_C"/>
</dbReference>
<dbReference type="InterPro" id="IPR013033">
    <property type="entry name" value="MinC"/>
</dbReference>
<dbReference type="InterPro" id="IPR036145">
    <property type="entry name" value="MinC_C_sf"/>
</dbReference>
<dbReference type="InterPro" id="IPR055219">
    <property type="entry name" value="MinC_N_1"/>
</dbReference>
<dbReference type="InterPro" id="IPR005526">
    <property type="entry name" value="Septum_form_inhib_MinC_C"/>
</dbReference>
<dbReference type="NCBIfam" id="TIGR01222">
    <property type="entry name" value="minC"/>
    <property type="match status" value="1"/>
</dbReference>
<dbReference type="PANTHER" id="PTHR34108">
    <property type="entry name" value="SEPTUM SITE-DETERMINING PROTEIN MINC"/>
    <property type="match status" value="1"/>
</dbReference>
<dbReference type="PANTHER" id="PTHR34108:SF1">
    <property type="entry name" value="SEPTUM SITE-DETERMINING PROTEIN MINC"/>
    <property type="match status" value="1"/>
</dbReference>
<dbReference type="Pfam" id="PF03775">
    <property type="entry name" value="MinC_C"/>
    <property type="match status" value="1"/>
</dbReference>
<dbReference type="Pfam" id="PF22642">
    <property type="entry name" value="MinC_N_1"/>
    <property type="match status" value="1"/>
</dbReference>
<dbReference type="SUPFAM" id="SSF63848">
    <property type="entry name" value="Cell-division inhibitor MinC, C-terminal domain"/>
    <property type="match status" value="1"/>
</dbReference>
<protein>
    <recommendedName>
        <fullName evidence="1">Probable septum site-determining protein MinC</fullName>
    </recommendedName>
</protein>
<keyword id="KW-0131">Cell cycle</keyword>
<keyword id="KW-0132">Cell division</keyword>
<keyword id="KW-0717">Septation</keyword>
<sequence>MDEKKQQNITIKGTKDGLTLHLDDCCSFTELLQELDEKLSTHYYDGDGRSLIEVHVKVGNRYLTEVQQEEIRTLIRNKKNLVVDSIESDVITKAEAIAWKEETEIVPISKIVRSGQVLHVKGNLLLIGDVNPGGMVIAGGNIFVVGSLRGIAHAGYYGDKDAVIAASVMNPMQLRISDVTTRAPEEKEDGAETAECAYINEDNHIVVDRLQLLTHLRPNLTKLERGIV</sequence>
<comment type="function">
    <text evidence="1">Cell division inhibitor that blocks the formation of polar Z ring septums. Rapidly oscillates between the poles of the cell to destabilize FtsZ filaments that have formed before they mature into polar Z rings. Prevents FtsZ polymerization.</text>
</comment>
<comment type="subunit">
    <text evidence="1">Interacts with MinD and FtsZ.</text>
</comment>
<comment type="similarity">
    <text evidence="1">Belongs to the MinC family.</text>
</comment>